<gene>
    <name type="primary">COL3A1</name>
</gene>
<name>CO3A1_CHICK</name>
<reference key="1">
    <citation type="journal article" date="1994" name="J. Biol. Chem.">
        <title>An alternative transcript of the chick type III collagen gene that does not encode type III collagen.</title>
        <authorList>
            <person name="Nah H.-D."/>
            <person name="Niu Z."/>
            <person name="Adams S.L."/>
        </authorList>
    </citation>
    <scope>NUCLEOTIDE SEQUENCE [MRNA] OF 1-886</scope>
    <source>
        <tissue>Kidney</tissue>
    </source>
</reference>
<reference key="2">
    <citation type="journal article" date="1984" name="Nature">
        <title>Conservation of the sizes for one but not another class of exons in two chick collagen genes.</title>
        <authorList>
            <person name="Yamada Y."/>
            <person name="Liau G."/>
            <person name="Mudryj M."/>
            <person name="Obici S."/>
            <person name="de Crombrugghe B."/>
        </authorList>
    </citation>
    <scope>NUCLEOTIDE SEQUENCE [GENOMIC DNA] OF 29-96; 332-397; 431-484; 503-535 AND 869-976</scope>
</reference>
<reference key="3">
    <citation type="journal article" date="1983" name="J. Biol. Chem.">
        <title>Isolation and characterization of a genomic clone encoding chick alpha-1 type III collagen.</title>
        <authorList>
            <person name="Yamada Y."/>
            <person name="Mudryj M."/>
            <person name="Sullivan M."/>
            <person name="de Crombrugghe B."/>
        </authorList>
    </citation>
    <scope>NUCLEOTIDE SEQUENCE [GENOMIC DNA] OF 869-886 AND 977-994</scope>
</reference>
<reference key="4">
    <citation type="journal article" date="1983" name="Nucleic Acids Res.">
        <title>A conserved nucleotide sequence, coding for a segment of the C-propeptide, is found at the same location in different collagen genes.</title>
        <authorList>
            <person name="Yamada Y."/>
            <person name="Kuhn K."/>
            <person name="de Crombrugghe B."/>
        </authorList>
    </citation>
    <scope>NUCLEOTIDE SEQUENCE OF 977-1262</scope>
</reference>
<keyword id="KW-0106">Calcium</keyword>
<keyword id="KW-0176">Collagen</keyword>
<keyword id="KW-1015">Disulfide bond</keyword>
<keyword id="KW-0272">Extracellular matrix</keyword>
<keyword id="KW-0325">Glycoprotein</keyword>
<keyword id="KW-0379">Hydroxylation</keyword>
<keyword id="KW-0479">Metal-binding</keyword>
<keyword id="KW-1185">Reference proteome</keyword>
<keyword id="KW-0677">Repeat</keyword>
<keyword id="KW-0964">Secreted</keyword>
<keyword id="KW-0732">Signal</keyword>
<dbReference type="EMBL" id="U07973">
    <property type="protein sequence ID" value="AAA83407.1"/>
    <property type="molecule type" value="mRNA"/>
</dbReference>
<dbReference type="EMBL" id="X00822">
    <property type="protein sequence ID" value="CAB52686.1"/>
    <property type="molecule type" value="Genomic_DNA"/>
</dbReference>
<dbReference type="EMBL" id="X00823">
    <property type="protein sequence ID" value="CAB52686.1"/>
    <property type="status" value="JOINED"/>
    <property type="molecule type" value="Genomic_DNA"/>
</dbReference>
<dbReference type="EMBL" id="X00826">
    <property type="protein sequence ID" value="CAA25397.1"/>
    <property type="status" value="ALT_SEQ"/>
    <property type="molecule type" value="Genomic_DNA"/>
</dbReference>
<dbReference type="EMBL" id="X00825">
    <property type="protein sequence ID" value="CAA25397.1"/>
    <property type="status" value="JOINED"/>
    <property type="molecule type" value="Genomic_DNA"/>
</dbReference>
<dbReference type="EMBL" id="X00827">
    <property type="protein sequence ID" value="CAA25398.1"/>
    <property type="molecule type" value="Genomic_DNA"/>
</dbReference>
<dbReference type="EMBL" id="X00828">
    <property type="protein sequence ID" value="CAA25399.1"/>
    <property type="molecule type" value="Genomic_DNA"/>
</dbReference>
<dbReference type="EMBL" id="X00830">
    <property type="protein sequence ID" value="CAA25401.1"/>
    <property type="molecule type" value="Genomic_DNA"/>
</dbReference>
<dbReference type="EMBL" id="X00831">
    <property type="protein sequence ID" value="CAA25402.1"/>
    <property type="molecule type" value="Genomic_DNA"/>
</dbReference>
<dbReference type="EMBL" id="K02302">
    <property type="protein sequence ID" value="AAD15299.1"/>
    <property type="molecule type" value="Genomic_DNA"/>
</dbReference>
<dbReference type="EMBL" id="K02301">
    <property type="protein sequence ID" value="AAD15298.1"/>
    <property type="molecule type" value="Genomic_DNA"/>
</dbReference>
<dbReference type="EMBL" id="V00391">
    <property type="protein sequence ID" value="CAA23689.1"/>
    <property type="molecule type" value="Genomic_DNA"/>
</dbReference>
<dbReference type="EMBL" id="V00392">
    <property type="protein sequence ID" value="CAA23690.1"/>
    <property type="molecule type" value="Genomic_DNA"/>
</dbReference>
<dbReference type="EMBL" id="M36662">
    <property type="protein sequence ID" value="AAA18519.1"/>
    <property type="status" value="ALT_SEQ"/>
    <property type="molecule type" value="Unassigned_DNA"/>
</dbReference>
<dbReference type="PIR" id="A05269">
    <property type="entry name" value="A05269"/>
</dbReference>
<dbReference type="PIR" id="I50694">
    <property type="entry name" value="I50694"/>
</dbReference>
<dbReference type="SMR" id="P12105"/>
<dbReference type="STRING" id="9031.ENSGALP00000051057"/>
<dbReference type="GlyCosmos" id="P12105">
    <property type="glycosylation" value="1 site, No reported glycans"/>
</dbReference>
<dbReference type="GlyGen" id="P12105">
    <property type="glycosylation" value="5 sites"/>
</dbReference>
<dbReference type="VEuPathDB" id="HostDB:geneid_396243"/>
<dbReference type="VEuPathDB" id="HostDB:geneid_396340"/>
<dbReference type="VEuPathDB" id="HostDB:geneid_424526"/>
<dbReference type="InParanoid" id="P12105"/>
<dbReference type="OrthoDB" id="8939548at2759"/>
<dbReference type="Proteomes" id="UP000000539">
    <property type="component" value="Unassembled WGS sequence"/>
</dbReference>
<dbReference type="GO" id="GO:0005581">
    <property type="term" value="C:collagen trimer"/>
    <property type="evidence" value="ECO:0007669"/>
    <property type="project" value="UniProtKB-KW"/>
</dbReference>
<dbReference type="GO" id="GO:0062023">
    <property type="term" value="C:collagen-containing extracellular matrix"/>
    <property type="evidence" value="ECO:0000318"/>
    <property type="project" value="GO_Central"/>
</dbReference>
<dbReference type="GO" id="GO:0005576">
    <property type="term" value="C:extracellular region"/>
    <property type="evidence" value="ECO:0000304"/>
    <property type="project" value="Reactome"/>
</dbReference>
<dbReference type="GO" id="GO:0005615">
    <property type="term" value="C:extracellular space"/>
    <property type="evidence" value="ECO:0000318"/>
    <property type="project" value="GO_Central"/>
</dbReference>
<dbReference type="GO" id="GO:0030020">
    <property type="term" value="F:extracellular matrix structural constituent conferring tensile strength"/>
    <property type="evidence" value="ECO:0000318"/>
    <property type="project" value="GO_Central"/>
</dbReference>
<dbReference type="GO" id="GO:0046872">
    <property type="term" value="F:metal ion binding"/>
    <property type="evidence" value="ECO:0007669"/>
    <property type="project" value="UniProtKB-KW"/>
</dbReference>
<dbReference type="FunFam" id="2.60.120.1000:FF:000001">
    <property type="entry name" value="Collagen alpha-1 type I chain"/>
    <property type="match status" value="1"/>
</dbReference>
<dbReference type="FunFam" id="2.10.70.10:FF:000013">
    <property type="entry name" value="Collagen, type I, alpha 1"/>
    <property type="match status" value="1"/>
</dbReference>
<dbReference type="Gene3D" id="2.60.120.1000">
    <property type="match status" value="1"/>
</dbReference>
<dbReference type="Gene3D" id="2.10.70.10">
    <property type="entry name" value="Complement Module, domain 1"/>
    <property type="match status" value="1"/>
</dbReference>
<dbReference type="InterPro" id="IPR008160">
    <property type="entry name" value="Collagen"/>
</dbReference>
<dbReference type="InterPro" id="IPR050938">
    <property type="entry name" value="Collagen_Structural_Proteins"/>
</dbReference>
<dbReference type="InterPro" id="IPR000885">
    <property type="entry name" value="Fib_collagen_C"/>
</dbReference>
<dbReference type="InterPro" id="IPR001007">
    <property type="entry name" value="VWF_dom"/>
</dbReference>
<dbReference type="NCBIfam" id="NF040941">
    <property type="entry name" value="GGGWT_bact"/>
    <property type="match status" value="1"/>
</dbReference>
<dbReference type="PANTHER" id="PTHR37456:SF6">
    <property type="entry name" value="COLLAGEN ALPHA-1(XXIII) CHAIN-LIKE ISOFORM X2"/>
    <property type="match status" value="1"/>
</dbReference>
<dbReference type="PANTHER" id="PTHR37456">
    <property type="entry name" value="SI:CH211-266K2.1"/>
    <property type="match status" value="1"/>
</dbReference>
<dbReference type="Pfam" id="PF01410">
    <property type="entry name" value="COLFI"/>
    <property type="match status" value="1"/>
</dbReference>
<dbReference type="Pfam" id="PF01391">
    <property type="entry name" value="Collagen"/>
    <property type="match status" value="2"/>
</dbReference>
<dbReference type="Pfam" id="PF00093">
    <property type="entry name" value="VWC"/>
    <property type="match status" value="1"/>
</dbReference>
<dbReference type="SMART" id="SM00038">
    <property type="entry name" value="COLFI"/>
    <property type="match status" value="1"/>
</dbReference>
<dbReference type="SMART" id="SM00214">
    <property type="entry name" value="VWC"/>
    <property type="match status" value="1"/>
</dbReference>
<dbReference type="SUPFAM" id="SSF57603">
    <property type="entry name" value="FnI-like domain"/>
    <property type="match status" value="1"/>
</dbReference>
<dbReference type="PROSITE" id="PS51461">
    <property type="entry name" value="NC1_FIB"/>
    <property type="match status" value="1"/>
</dbReference>
<dbReference type="PROSITE" id="PS01208">
    <property type="entry name" value="VWFC_1"/>
    <property type="match status" value="1"/>
</dbReference>
<dbReference type="PROSITE" id="PS50184">
    <property type="entry name" value="VWFC_2"/>
    <property type="match status" value="1"/>
</dbReference>
<feature type="signal peptide" evidence="2">
    <location>
        <begin position="1"/>
        <end position="23"/>
    </location>
</feature>
<feature type="propeptide" id="PRO_0000005737" description="N-terminal propeptide" evidence="1">
    <location>
        <begin position="24"/>
        <end position="150"/>
    </location>
</feature>
<feature type="chain" id="PRO_0000005738" description="Collagen alpha-1(III) chain">
    <location>
        <begin position="151"/>
        <end position="1017"/>
    </location>
</feature>
<feature type="propeptide" id="PRO_0000005739" description="C-terminal propeptide" evidence="1">
    <location>
        <begin position="1018"/>
        <end position="1262"/>
    </location>
</feature>
<feature type="domain" description="VWFC" evidence="3">
    <location>
        <begin position="29"/>
        <end position="88"/>
    </location>
</feature>
<feature type="domain" description="Fibrillar collagen NC1" evidence="4">
    <location>
        <begin position="1028"/>
        <end position="1262"/>
    </location>
</feature>
<feature type="region of interest" description="Disordered" evidence="5">
    <location>
        <begin position="95"/>
        <end position="143"/>
    </location>
</feature>
<feature type="region of interest" description="Nonhelical region (N-terminal)">
    <location>
        <begin position="145"/>
        <end position="164"/>
    </location>
</feature>
<feature type="region of interest" description="Disordered" evidence="5">
    <location>
        <begin position="160"/>
        <end position="1000"/>
    </location>
</feature>
<feature type="region of interest" description="Triple-helical region">
    <location>
        <begin position="165"/>
        <end position="994"/>
    </location>
</feature>
<feature type="region of interest" description="Nonhelical region (C-terminal)">
    <location>
        <begin position="995"/>
        <end position="1003"/>
    </location>
</feature>
<feature type="compositionally biased region" description="Low complexity" evidence="5">
    <location>
        <begin position="102"/>
        <end position="118"/>
    </location>
</feature>
<feature type="compositionally biased region" description="Pro residues" evidence="5">
    <location>
        <begin position="119"/>
        <end position="134"/>
    </location>
</feature>
<feature type="compositionally biased region" description="Pro residues" evidence="5">
    <location>
        <begin position="167"/>
        <end position="190"/>
    </location>
</feature>
<feature type="compositionally biased region" description="Low complexity" evidence="5">
    <location>
        <begin position="192"/>
        <end position="201"/>
    </location>
</feature>
<feature type="compositionally biased region" description="Pro residues" evidence="5">
    <location>
        <begin position="202"/>
        <end position="216"/>
    </location>
</feature>
<feature type="compositionally biased region" description="Basic and acidic residues" evidence="5">
    <location>
        <begin position="228"/>
        <end position="240"/>
    </location>
</feature>
<feature type="compositionally biased region" description="Low complexity" evidence="5">
    <location>
        <begin position="253"/>
        <end position="264"/>
    </location>
</feature>
<feature type="compositionally biased region" description="Basic and acidic residues" evidence="5">
    <location>
        <begin position="265"/>
        <end position="274"/>
    </location>
</feature>
<feature type="compositionally biased region" description="Low complexity" evidence="5">
    <location>
        <begin position="276"/>
        <end position="295"/>
    </location>
</feature>
<feature type="compositionally biased region" description="Low complexity" evidence="5">
    <location>
        <begin position="339"/>
        <end position="376"/>
    </location>
</feature>
<feature type="compositionally biased region" description="Gly residues" evidence="5">
    <location>
        <begin position="389"/>
        <end position="414"/>
    </location>
</feature>
<feature type="compositionally biased region" description="Low complexity" evidence="5">
    <location>
        <begin position="534"/>
        <end position="549"/>
    </location>
</feature>
<feature type="compositionally biased region" description="Low complexity" evidence="5">
    <location>
        <begin position="631"/>
        <end position="640"/>
    </location>
</feature>
<feature type="compositionally biased region" description="Gly residues" evidence="5">
    <location>
        <begin position="641"/>
        <end position="650"/>
    </location>
</feature>
<feature type="compositionally biased region" description="Low complexity" evidence="5">
    <location>
        <begin position="672"/>
        <end position="684"/>
    </location>
</feature>
<feature type="compositionally biased region" description="Gly residues" evidence="5">
    <location>
        <begin position="692"/>
        <end position="701"/>
    </location>
</feature>
<feature type="compositionally biased region" description="Low complexity" evidence="5">
    <location>
        <begin position="723"/>
        <end position="738"/>
    </location>
</feature>
<feature type="compositionally biased region" description="Low complexity" evidence="5">
    <location>
        <begin position="781"/>
        <end position="790"/>
    </location>
</feature>
<feature type="compositionally biased region" description="Low complexity" evidence="5">
    <location>
        <begin position="802"/>
        <end position="817"/>
    </location>
</feature>
<feature type="compositionally biased region" description="Low complexity" evidence="5">
    <location>
        <begin position="828"/>
        <end position="838"/>
    </location>
</feature>
<feature type="compositionally biased region" description="Gly residues" evidence="5">
    <location>
        <begin position="863"/>
        <end position="872"/>
    </location>
</feature>
<feature type="compositionally biased region" description="Pro residues" evidence="5">
    <location>
        <begin position="895"/>
        <end position="904"/>
    </location>
</feature>
<feature type="compositionally biased region" description="Low complexity" evidence="5">
    <location>
        <begin position="927"/>
        <end position="940"/>
    </location>
</feature>
<feature type="compositionally biased region" description="Pro residues" evidence="5">
    <location>
        <begin position="976"/>
        <end position="993"/>
    </location>
</feature>
<feature type="binding site" evidence="1">
    <location>
        <position position="1076"/>
    </location>
    <ligand>
        <name>Ca(2+)</name>
        <dbReference type="ChEBI" id="CHEBI:29108"/>
    </ligand>
</feature>
<feature type="binding site" evidence="1">
    <location>
        <position position="1078"/>
    </location>
    <ligand>
        <name>Ca(2+)</name>
        <dbReference type="ChEBI" id="CHEBI:29108"/>
    </ligand>
</feature>
<feature type="binding site" evidence="1">
    <location>
        <position position="1079"/>
    </location>
    <ligand>
        <name>Ca(2+)</name>
        <dbReference type="ChEBI" id="CHEBI:29108"/>
    </ligand>
</feature>
<feature type="binding site" evidence="1">
    <location>
        <position position="1081"/>
    </location>
    <ligand>
        <name>Ca(2+)</name>
        <dbReference type="ChEBI" id="CHEBI:29108"/>
    </ligand>
</feature>
<feature type="binding site" evidence="1">
    <location>
        <position position="1084"/>
    </location>
    <ligand>
        <name>Ca(2+)</name>
        <dbReference type="ChEBI" id="CHEBI:29108"/>
    </ligand>
</feature>
<feature type="modified residue" description="5-hydroxylysine" evidence="1">
    <location>
        <position position="262"/>
    </location>
</feature>
<feature type="modified residue" description="5-hydroxylysine" evidence="1">
    <location>
        <position position="283"/>
    </location>
</feature>
<feature type="modified residue" description="5-hydroxylysine" evidence="1">
    <location>
        <position position="859"/>
    </location>
</feature>
<feature type="glycosylation site" description="N-linked (GlcNAc...) asparagine" evidence="2">
    <location>
        <position position="1163"/>
    </location>
</feature>
<feature type="disulfide bond" description="Interchain" evidence="4">
    <location>
        <position position="994"/>
    </location>
</feature>
<feature type="disulfide bond" description="Interchain" evidence="4">
    <location>
        <position position="995"/>
    </location>
</feature>
<feature type="disulfide bond" evidence="4">
    <location>
        <begin position="1058"/>
        <end position="1090"/>
    </location>
</feature>
<feature type="disulfide bond" description="Interchain (with C-1285)" evidence="4">
    <location>
        <position position="1064"/>
    </location>
</feature>
<feature type="disulfide bond" description="Interchain (with C-1268)" evidence="4">
    <location>
        <position position="1081"/>
    </location>
</feature>
<feature type="disulfide bond" evidence="4">
    <location>
        <begin position="1098"/>
        <end position="1260"/>
    </location>
</feature>
<feature type="disulfide bond" evidence="4">
    <location>
        <begin position="1168"/>
        <end position="1213"/>
    </location>
</feature>
<feature type="sequence conflict" description="In Ref. 2." evidence="6" ref="2">
    <original>E</original>
    <variation>K</variation>
    <location>
        <position position="96"/>
    </location>
</feature>
<feature type="sequence conflict" description="In Ref. 3; CAA23689." evidence="6" ref="3">
    <original>G</original>
    <variation>R</variation>
    <location>
        <position position="881"/>
    </location>
</feature>
<feature type="sequence conflict" description="In Ref. 3; CAA23689." evidence="6" ref="3">
    <original>G</original>
    <variation>V</variation>
    <location>
        <position position="884"/>
    </location>
</feature>
<feature type="sequence conflict" description="In Ref. 3; CAA23690." evidence="6" ref="3">
    <original>L</original>
    <variation>V</variation>
    <location>
        <position position="984"/>
    </location>
</feature>
<feature type="sequence conflict" description="In Ref. 4; AAA18519." evidence="6" ref="4">
    <original>F</original>
    <variation>S</variation>
    <location>
        <position position="1132"/>
    </location>
</feature>
<feature type="non-consecutive residues" evidence="6">
    <location>
        <begin position="886"/>
        <end position="887"/>
    </location>
</feature>
<feature type="non-consecutive residues" evidence="6">
    <location>
        <begin position="922"/>
        <end position="923"/>
    </location>
</feature>
<comment type="function">
    <text>Collagen type III occurs in most soft connective tissues along with type I collagen.</text>
</comment>
<comment type="subunit">
    <text>Trimers of identical alpha 1(III) chains. The chains are linked to each other by interchain disulfide bonds. Trimers are also cross-linked via hydroxylysines.</text>
</comment>
<comment type="subcellular location">
    <subcellularLocation>
        <location evidence="4">Secreted</location>
        <location evidence="4">Extracellular space</location>
        <location evidence="4">Extracellular matrix</location>
    </subcellularLocation>
</comment>
<comment type="domain">
    <text evidence="1">The C-terminal propeptide, also known as COLFI domain, have crucial roles in tissue growth and repair by controlling both the intracellular assembly of procollagen molecules and the extracellular assembly of collagen fibrils. It binds a calcium ion which is essential for its function (By similarity).</text>
</comment>
<comment type="PTM">
    <text>Prolines at the third position of the tripeptide repeating unit (G-X-Y) are hydroxylated in some or all of the chains.</text>
</comment>
<comment type="similarity">
    <text evidence="4">Belongs to the fibrillar collagen family.</text>
</comment>
<accession>P12105</accession>
<accession>P79758</accession>
<accession>P79759</accession>
<accession>Q90790</accession>
<accession>Q90791</accession>
<accession>Q90794</accession>
<accession>Q92029</accession>
<sequence>MMSFVQKVSLFILAVFQPSVILAQQDALGGCTHLGQEYADRDVWKPEPCQICVCDSGSVLCDDIICDDQELDCPNPEIPLGECCPVCPQTTPQPTELPYTQGPKGDPGSPGSPGRTGAPGPPGQPGSPGAPGPPGICQSCPSISGGSFSPQYDSYDVKAGSVGMGYPPQPISGFPGPPGPSGPPGPPGHAGPPGSNGYQGPPGEPGQPGPSGPPGPAGMIGPAGPPGKDGEPGRPGRNGDRGIPGLPGHKGHPGMPGMPGMKGARGFDGKDGAKGDSGAPGPKGEAGQPGANGSPGQPGPGGPTGERGRPGNPGGPGAHGKDGAPGTAGPLGPPGPPGTAGFPGSPGFKGEAGPPGPAGASGNPGERGEPGPQGQAGPPGPQGPPGRAGSPGGKGEMGPSGIPGGPGPPGGRGLPGPPGTSGNPGAKGTPGEPGKNGAKGDPGPKGERGENGTPGARGPPGEEGKRGANGEPGQNGVPGTPGERGSPGFRGLPGSNGLPGEKGPAGERGSPGPPGPSGPAGDRGQDGGPGLPGMRGLPGIPGSPGSDGKPGPPGNQGEPGRSGPPGPAGPRGQPGVMGFPGPKGNEGAPGKNGERGPGGPPGTPGPAGKNGDVGLPGPPGPAGPAGDRGEPGPSGSPGLQGLPGGPGPAGENGKPGEPGPKGDIGGPGFPGPKGENGIPGERGPQGPPGPTGARGGPGPAGSEGAKGPPGPPGAPGGTGLPGLQGMPGERGASGSPGPKGDKGEPGGKGADGLPGARGERGNVGPIGPPGPAGPPGDKGETGPAGAPGPAGSRGGPGERGEQGLPGPAGFPGAPGQNGEPGGKGERGPPGLRGEAGPPGAAGPQGGPGAPGPPGPQGVKGERGSPGGPGAAGFPGARGPPGPPGNNGDRGESGPPGVPGPPGHPGPAGNNGAPGKAGERGFQGPLGPQGAIGSPGASGARGPPGPAGPPGKDGRGGYPGPIGPPGPRGNRGESGPAGPPGQPGLPGPSGPPGPCCGGGVASLGAGEKGPVGYGYEYRDEPKENEINLGEIMSSMKSINNQIENILSPDGSRKNPARNCRDLKFCHPELKSGEYWIDPNQGCKMDAIKVYCNMETGETCLSANPATVPRKNWWTTESSGKKHVWFGESMKGGFQFSYGDPDLPEDVSEVQLAFLRILSSRASQNITYHCKNSIAYMNQASGNVKKALKLMSSVETDIKAEGNSKYMYAVLEDGCTKHTGEWGKTVFEYRTRKTMRLPVVDIAPIDIGGPDQEFGVDVGPVCFL</sequence>
<evidence type="ECO:0000250" key="1"/>
<evidence type="ECO:0000255" key="2"/>
<evidence type="ECO:0000255" key="3">
    <source>
        <dbReference type="PROSITE-ProRule" id="PRU00220"/>
    </source>
</evidence>
<evidence type="ECO:0000255" key="4">
    <source>
        <dbReference type="PROSITE-ProRule" id="PRU00793"/>
    </source>
</evidence>
<evidence type="ECO:0000256" key="5">
    <source>
        <dbReference type="SAM" id="MobiDB-lite"/>
    </source>
</evidence>
<evidence type="ECO:0000305" key="6"/>
<protein>
    <recommendedName>
        <fullName>Collagen alpha-1(III) chain</fullName>
    </recommendedName>
</protein>
<organism>
    <name type="scientific">Gallus gallus</name>
    <name type="common">Chicken</name>
    <dbReference type="NCBI Taxonomy" id="9031"/>
    <lineage>
        <taxon>Eukaryota</taxon>
        <taxon>Metazoa</taxon>
        <taxon>Chordata</taxon>
        <taxon>Craniata</taxon>
        <taxon>Vertebrata</taxon>
        <taxon>Euteleostomi</taxon>
        <taxon>Archelosauria</taxon>
        <taxon>Archosauria</taxon>
        <taxon>Dinosauria</taxon>
        <taxon>Saurischia</taxon>
        <taxon>Theropoda</taxon>
        <taxon>Coelurosauria</taxon>
        <taxon>Aves</taxon>
        <taxon>Neognathae</taxon>
        <taxon>Galloanserae</taxon>
        <taxon>Galliformes</taxon>
        <taxon>Phasianidae</taxon>
        <taxon>Phasianinae</taxon>
        <taxon>Gallus</taxon>
    </lineage>
</organism>
<proteinExistence type="evidence at transcript level"/>